<dbReference type="EC" id="2.4.1.18" evidence="1"/>
<dbReference type="EMBL" id="CP000267">
    <property type="protein sequence ID" value="ABD69886.1"/>
    <property type="molecule type" value="Genomic_DNA"/>
</dbReference>
<dbReference type="RefSeq" id="WP_011464454.1">
    <property type="nucleotide sequence ID" value="NC_007908.1"/>
</dbReference>
<dbReference type="SMR" id="Q21WG7"/>
<dbReference type="STRING" id="338969.Rfer_2162"/>
<dbReference type="CAZy" id="CBM48">
    <property type="family name" value="Carbohydrate-Binding Module Family 48"/>
</dbReference>
<dbReference type="CAZy" id="GH13">
    <property type="family name" value="Glycoside Hydrolase Family 13"/>
</dbReference>
<dbReference type="KEGG" id="rfr:Rfer_2162"/>
<dbReference type="eggNOG" id="COG0296">
    <property type="taxonomic scope" value="Bacteria"/>
</dbReference>
<dbReference type="HOGENOM" id="CLU_004245_3_2_4"/>
<dbReference type="OrthoDB" id="9800174at2"/>
<dbReference type="UniPathway" id="UPA00164"/>
<dbReference type="Proteomes" id="UP000008332">
    <property type="component" value="Chromosome"/>
</dbReference>
<dbReference type="GO" id="GO:0005829">
    <property type="term" value="C:cytosol"/>
    <property type="evidence" value="ECO:0007669"/>
    <property type="project" value="TreeGrafter"/>
</dbReference>
<dbReference type="GO" id="GO:0003844">
    <property type="term" value="F:1,4-alpha-glucan branching enzyme activity"/>
    <property type="evidence" value="ECO:0007669"/>
    <property type="project" value="UniProtKB-UniRule"/>
</dbReference>
<dbReference type="GO" id="GO:0043169">
    <property type="term" value="F:cation binding"/>
    <property type="evidence" value="ECO:0007669"/>
    <property type="project" value="InterPro"/>
</dbReference>
<dbReference type="GO" id="GO:0004553">
    <property type="term" value="F:hydrolase activity, hydrolyzing O-glycosyl compounds"/>
    <property type="evidence" value="ECO:0007669"/>
    <property type="project" value="InterPro"/>
</dbReference>
<dbReference type="GO" id="GO:0005978">
    <property type="term" value="P:glycogen biosynthetic process"/>
    <property type="evidence" value="ECO:0007669"/>
    <property type="project" value="UniProtKB-UniRule"/>
</dbReference>
<dbReference type="CDD" id="cd11322">
    <property type="entry name" value="AmyAc_Glg_BE"/>
    <property type="match status" value="1"/>
</dbReference>
<dbReference type="CDD" id="cd02855">
    <property type="entry name" value="E_set_GBE_prok_N"/>
    <property type="match status" value="1"/>
</dbReference>
<dbReference type="FunFam" id="2.60.40.1180:FF:000002">
    <property type="entry name" value="1,4-alpha-glucan branching enzyme GlgB"/>
    <property type="match status" value="1"/>
</dbReference>
<dbReference type="FunFam" id="3.20.20.80:FF:000003">
    <property type="entry name" value="1,4-alpha-glucan branching enzyme GlgB"/>
    <property type="match status" value="1"/>
</dbReference>
<dbReference type="Gene3D" id="3.20.20.80">
    <property type="entry name" value="Glycosidases"/>
    <property type="match status" value="1"/>
</dbReference>
<dbReference type="Gene3D" id="2.60.40.1180">
    <property type="entry name" value="Golgi alpha-mannosidase II"/>
    <property type="match status" value="1"/>
</dbReference>
<dbReference type="Gene3D" id="2.60.40.10">
    <property type="entry name" value="Immunoglobulins"/>
    <property type="match status" value="1"/>
</dbReference>
<dbReference type="HAMAP" id="MF_00685">
    <property type="entry name" value="GlgB"/>
    <property type="match status" value="1"/>
</dbReference>
<dbReference type="InterPro" id="IPR006048">
    <property type="entry name" value="A-amylase/branching_C"/>
</dbReference>
<dbReference type="InterPro" id="IPR037439">
    <property type="entry name" value="Branching_enzy"/>
</dbReference>
<dbReference type="InterPro" id="IPR006407">
    <property type="entry name" value="GlgB"/>
</dbReference>
<dbReference type="InterPro" id="IPR044143">
    <property type="entry name" value="GlgB_N_E_set_prok"/>
</dbReference>
<dbReference type="InterPro" id="IPR006047">
    <property type="entry name" value="Glyco_hydro_13_cat_dom"/>
</dbReference>
<dbReference type="InterPro" id="IPR004193">
    <property type="entry name" value="Glyco_hydro_13_N"/>
</dbReference>
<dbReference type="InterPro" id="IPR013780">
    <property type="entry name" value="Glyco_hydro_b"/>
</dbReference>
<dbReference type="InterPro" id="IPR017853">
    <property type="entry name" value="Glycoside_hydrolase_SF"/>
</dbReference>
<dbReference type="InterPro" id="IPR013783">
    <property type="entry name" value="Ig-like_fold"/>
</dbReference>
<dbReference type="InterPro" id="IPR014756">
    <property type="entry name" value="Ig_E-set"/>
</dbReference>
<dbReference type="NCBIfam" id="TIGR01515">
    <property type="entry name" value="branching_enzym"/>
    <property type="match status" value="1"/>
</dbReference>
<dbReference type="NCBIfam" id="NF003811">
    <property type="entry name" value="PRK05402.1"/>
    <property type="match status" value="1"/>
</dbReference>
<dbReference type="NCBIfam" id="NF008967">
    <property type="entry name" value="PRK12313.1"/>
    <property type="match status" value="1"/>
</dbReference>
<dbReference type="PANTHER" id="PTHR43651">
    <property type="entry name" value="1,4-ALPHA-GLUCAN-BRANCHING ENZYME"/>
    <property type="match status" value="1"/>
</dbReference>
<dbReference type="PANTHER" id="PTHR43651:SF3">
    <property type="entry name" value="1,4-ALPHA-GLUCAN-BRANCHING ENZYME"/>
    <property type="match status" value="1"/>
</dbReference>
<dbReference type="Pfam" id="PF00128">
    <property type="entry name" value="Alpha-amylase"/>
    <property type="match status" value="2"/>
</dbReference>
<dbReference type="Pfam" id="PF02806">
    <property type="entry name" value="Alpha-amylase_C"/>
    <property type="match status" value="1"/>
</dbReference>
<dbReference type="Pfam" id="PF02922">
    <property type="entry name" value="CBM_48"/>
    <property type="match status" value="1"/>
</dbReference>
<dbReference type="PIRSF" id="PIRSF000463">
    <property type="entry name" value="GlgB"/>
    <property type="match status" value="1"/>
</dbReference>
<dbReference type="SMART" id="SM00642">
    <property type="entry name" value="Aamy"/>
    <property type="match status" value="1"/>
</dbReference>
<dbReference type="SUPFAM" id="SSF51445">
    <property type="entry name" value="(Trans)glycosidases"/>
    <property type="match status" value="1"/>
</dbReference>
<dbReference type="SUPFAM" id="SSF81296">
    <property type="entry name" value="E set domains"/>
    <property type="match status" value="1"/>
</dbReference>
<dbReference type="SUPFAM" id="SSF51011">
    <property type="entry name" value="Glycosyl hydrolase domain"/>
    <property type="match status" value="1"/>
</dbReference>
<protein>
    <recommendedName>
        <fullName evidence="1">1,4-alpha-glucan branching enzyme GlgB</fullName>
        <ecNumber evidence="1">2.4.1.18</ecNumber>
    </recommendedName>
    <alternativeName>
        <fullName evidence="1">1,4-alpha-D-glucan:1,4-alpha-D-glucan 6-glucosyl-transferase</fullName>
    </alternativeName>
    <alternativeName>
        <fullName evidence="1">Alpha-(1-&gt;4)-glucan branching enzyme</fullName>
    </alternativeName>
    <alternativeName>
        <fullName evidence="1">Glycogen branching enzyme</fullName>
        <shortName evidence="1">BE</shortName>
    </alternativeName>
</protein>
<evidence type="ECO:0000255" key="1">
    <source>
        <dbReference type="HAMAP-Rule" id="MF_00685"/>
    </source>
</evidence>
<gene>
    <name evidence="1" type="primary">glgB</name>
    <name type="ordered locus">Rfer_2162</name>
</gene>
<proteinExistence type="inferred from homology"/>
<sequence>MKSDHDIYLFREGTHAKLYNKLGCHLQSNGGANFAVWAPNAESVSVVGDWNYWSGNVDRLDLRDDGSGIWQGFVENAVRGQGYKYRIQSSHGSYGVDKADPFAFYAEPPPATASRVWSLEHDWKDDQWMSSRGPKNALDAPMSIYEIHLGSWRRQDGHFLDYRELAHSLADYVIEMGFTHVELMPVTEHPFYGSWGYQTTGYFAPTSRFGTPQDFMHFVDHLHQRGIGVLLDWVPSHFPTDEHGLGYFDGTHLFEHSDPRQGFHPEWNSSIFNYGRNEVRSFLISSGLFWLDKYHLDGLRVDGVASMLYLDYARKEDEWIPNRHGGRENLEAVDFLQTLNKAVYREYPDTLTIAEESTAWPRVSRPTDMDGLGFGMKWNMGWMHDSLAYMQQEPVHRKYHHHKLTFSLVYAFNENFVLPLSHDEVVHGKGSLLGKMPGDAWQQFANLRALFGYMWAHPGKKLLFMGGEFGQRREWTHDGELEWWVTKLEGHAGLQRYVAQLNRVYRSLPALYQLDFSPAGFEWVEADAADTSVFAFLRKPREHGAPVLIVSNMTPVPRTNYMLGVPLAGFWREVINSDASEFGGSGWGNLGGVEASPVRFHGRPHSVCLTLPPLSTLIFEHVPHA</sequence>
<accession>Q21WG7</accession>
<reference key="1">
    <citation type="submission" date="2006-02" db="EMBL/GenBank/DDBJ databases">
        <title>Complete sequence of chromosome of Rhodoferax ferrireducens DSM 15236.</title>
        <authorList>
            <person name="Copeland A."/>
            <person name="Lucas S."/>
            <person name="Lapidus A."/>
            <person name="Barry K."/>
            <person name="Detter J.C."/>
            <person name="Glavina del Rio T."/>
            <person name="Hammon N."/>
            <person name="Israni S."/>
            <person name="Pitluck S."/>
            <person name="Brettin T."/>
            <person name="Bruce D."/>
            <person name="Han C."/>
            <person name="Tapia R."/>
            <person name="Gilna P."/>
            <person name="Kiss H."/>
            <person name="Schmutz J."/>
            <person name="Larimer F."/>
            <person name="Land M."/>
            <person name="Kyrpides N."/>
            <person name="Ivanova N."/>
            <person name="Richardson P."/>
        </authorList>
    </citation>
    <scope>NUCLEOTIDE SEQUENCE [LARGE SCALE GENOMIC DNA]</scope>
    <source>
        <strain>ATCC BAA-621 / DSM 15236 / T118</strain>
    </source>
</reference>
<name>GLGB_ALBFT</name>
<organism>
    <name type="scientific">Albidiferax ferrireducens (strain ATCC BAA-621 / DSM 15236 / T118)</name>
    <name type="common">Rhodoferax ferrireducens</name>
    <dbReference type="NCBI Taxonomy" id="338969"/>
    <lineage>
        <taxon>Bacteria</taxon>
        <taxon>Pseudomonadati</taxon>
        <taxon>Pseudomonadota</taxon>
        <taxon>Betaproteobacteria</taxon>
        <taxon>Burkholderiales</taxon>
        <taxon>Comamonadaceae</taxon>
        <taxon>Rhodoferax</taxon>
    </lineage>
</organism>
<comment type="function">
    <text evidence="1">Catalyzes the formation of the alpha-1,6-glucosidic linkages in glycogen by scission of a 1,4-alpha-linked oligosaccharide from growing alpha-1,4-glucan chains and the subsequent attachment of the oligosaccharide to the alpha-1,6 position.</text>
</comment>
<comment type="catalytic activity">
    <reaction evidence="1">
        <text>Transfers a segment of a (1-&gt;4)-alpha-D-glucan chain to a primary hydroxy group in a similar glucan chain.</text>
        <dbReference type="EC" id="2.4.1.18"/>
    </reaction>
</comment>
<comment type="pathway">
    <text evidence="1">Glycan biosynthesis; glycogen biosynthesis.</text>
</comment>
<comment type="subunit">
    <text evidence="1">Monomer.</text>
</comment>
<comment type="similarity">
    <text evidence="1">Belongs to the glycosyl hydrolase 13 family. GlgB subfamily.</text>
</comment>
<keyword id="KW-0119">Carbohydrate metabolism</keyword>
<keyword id="KW-0320">Glycogen biosynthesis</keyword>
<keyword id="KW-0321">Glycogen metabolism</keyword>
<keyword id="KW-0328">Glycosyltransferase</keyword>
<keyword id="KW-1185">Reference proteome</keyword>
<keyword id="KW-0808">Transferase</keyword>
<feature type="chain" id="PRO_0000260688" description="1,4-alpha-glucan branching enzyme GlgB">
    <location>
        <begin position="1"/>
        <end position="625"/>
    </location>
</feature>
<feature type="active site" description="Nucleophile" evidence="1">
    <location>
        <position position="302"/>
    </location>
</feature>
<feature type="active site" description="Proton donor" evidence="1">
    <location>
        <position position="355"/>
    </location>
</feature>